<name>WDR81_RAT</name>
<dbReference type="EMBL" id="CH473948">
    <property type="protein sequence ID" value="EDM05212.1"/>
    <property type="molecule type" value="Genomic_DNA"/>
</dbReference>
<dbReference type="RefSeq" id="NP_001127832.1">
    <property type="nucleotide sequence ID" value="NM_001134360.1"/>
</dbReference>
<dbReference type="SMR" id="D4A929"/>
<dbReference type="FunCoup" id="D4A929">
    <property type="interactions" value="2268"/>
</dbReference>
<dbReference type="STRING" id="10116.ENSRNOP00000004365"/>
<dbReference type="GlyGen" id="D4A929">
    <property type="glycosylation" value="2 sites"/>
</dbReference>
<dbReference type="iPTMnet" id="D4A929"/>
<dbReference type="PhosphoSitePlus" id="D4A929"/>
<dbReference type="jPOST" id="D4A929"/>
<dbReference type="PaxDb" id="10116-ENSRNOP00000004365"/>
<dbReference type="PeptideAtlas" id="D4A929"/>
<dbReference type="GeneID" id="303312"/>
<dbReference type="KEGG" id="rno:303312"/>
<dbReference type="AGR" id="RGD:1311334"/>
<dbReference type="CTD" id="124997"/>
<dbReference type="RGD" id="1311334">
    <property type="gene designation" value="Wdr81"/>
</dbReference>
<dbReference type="VEuPathDB" id="HostDB:ENSRNOG00000003243"/>
<dbReference type="eggNOG" id="KOG1786">
    <property type="taxonomic scope" value="Eukaryota"/>
</dbReference>
<dbReference type="eggNOG" id="KOG4190">
    <property type="taxonomic scope" value="Eukaryota"/>
</dbReference>
<dbReference type="HOGENOM" id="CLU_001454_0_0_1"/>
<dbReference type="InParanoid" id="D4A929"/>
<dbReference type="PhylomeDB" id="D4A929"/>
<dbReference type="TreeFam" id="TF323353"/>
<dbReference type="PRO" id="PR:D4A929"/>
<dbReference type="Proteomes" id="UP000002494">
    <property type="component" value="Chromosome 10"/>
</dbReference>
<dbReference type="Proteomes" id="UP000234681">
    <property type="component" value="Chromosome 10"/>
</dbReference>
<dbReference type="Bgee" id="ENSRNOG00000003243">
    <property type="expression patterns" value="Expressed in spleen and 18 other cell types or tissues"/>
</dbReference>
<dbReference type="GO" id="GO:0000421">
    <property type="term" value="C:autophagosome membrane"/>
    <property type="evidence" value="ECO:0000250"/>
    <property type="project" value="UniProtKB"/>
</dbReference>
<dbReference type="GO" id="GO:0005829">
    <property type="term" value="C:cytosol"/>
    <property type="evidence" value="ECO:0000250"/>
    <property type="project" value="UniProtKB"/>
</dbReference>
<dbReference type="GO" id="GO:0031901">
    <property type="term" value="C:early endosome membrane"/>
    <property type="evidence" value="ECO:0000250"/>
    <property type="project" value="UniProtKB"/>
</dbReference>
<dbReference type="GO" id="GO:0010008">
    <property type="term" value="C:endosome membrane"/>
    <property type="evidence" value="ECO:0000250"/>
    <property type="project" value="UniProtKB"/>
</dbReference>
<dbReference type="GO" id="GO:0031902">
    <property type="term" value="C:late endosome membrane"/>
    <property type="evidence" value="ECO:0000250"/>
    <property type="project" value="UniProtKB"/>
</dbReference>
<dbReference type="GO" id="GO:0005765">
    <property type="term" value="C:lysosomal membrane"/>
    <property type="evidence" value="ECO:0000266"/>
    <property type="project" value="RGD"/>
</dbReference>
<dbReference type="GO" id="GO:0005739">
    <property type="term" value="C:mitochondrion"/>
    <property type="evidence" value="ECO:0000250"/>
    <property type="project" value="UniProtKB"/>
</dbReference>
<dbReference type="GO" id="GO:0070530">
    <property type="term" value="F:K63-linked polyubiquitin modification-dependent protein binding"/>
    <property type="evidence" value="ECO:0000250"/>
    <property type="project" value="UniProtKB"/>
</dbReference>
<dbReference type="GO" id="GO:0141039">
    <property type="term" value="F:phosphatidylinositol 3-kinase inhibitor activity"/>
    <property type="evidence" value="ECO:0000250"/>
    <property type="project" value="UniProtKB"/>
</dbReference>
<dbReference type="GO" id="GO:0035014">
    <property type="term" value="F:phosphatidylinositol 3-kinase regulator activity"/>
    <property type="evidence" value="ECO:0000318"/>
    <property type="project" value="GO_Central"/>
</dbReference>
<dbReference type="GO" id="GO:0035973">
    <property type="term" value="P:aggrephagy"/>
    <property type="evidence" value="ECO:0000250"/>
    <property type="project" value="UniProtKB"/>
</dbReference>
<dbReference type="GO" id="GO:0045022">
    <property type="term" value="P:early endosome to late endosome transport"/>
    <property type="evidence" value="ECO:0000250"/>
    <property type="project" value="UniProtKB"/>
</dbReference>
<dbReference type="GO" id="GO:0007005">
    <property type="term" value="P:mitochondrion organization"/>
    <property type="evidence" value="ECO:0000250"/>
    <property type="project" value="UniProtKB"/>
</dbReference>
<dbReference type="GO" id="GO:0050821">
    <property type="term" value="P:protein stabilization"/>
    <property type="evidence" value="ECO:0000266"/>
    <property type="project" value="RGD"/>
</dbReference>
<dbReference type="GO" id="GO:0006511">
    <property type="term" value="P:ubiquitin-dependent protein catabolic process"/>
    <property type="evidence" value="ECO:0000250"/>
    <property type="project" value="UniProtKB"/>
</dbReference>
<dbReference type="CDD" id="cd06071">
    <property type="entry name" value="Beach"/>
    <property type="match status" value="1"/>
</dbReference>
<dbReference type="FunFam" id="1.10.1540.10:FF:000003">
    <property type="entry name" value="WD repeat-containing protein 81 isoform X1"/>
    <property type="match status" value="1"/>
</dbReference>
<dbReference type="FunFam" id="2.130.10.10:FF:000341">
    <property type="entry name" value="WD repeat-containing protein 81 isoform X1"/>
    <property type="match status" value="1"/>
</dbReference>
<dbReference type="FunFam" id="2.130.10.10:FF:000355">
    <property type="entry name" value="WD repeat-containing protein 81 isoform X1"/>
    <property type="match status" value="1"/>
</dbReference>
<dbReference type="Gene3D" id="1.10.1540.10">
    <property type="entry name" value="BEACH domain"/>
    <property type="match status" value="1"/>
</dbReference>
<dbReference type="Gene3D" id="2.130.10.10">
    <property type="entry name" value="YVTN repeat-like/Quinoprotein amine dehydrogenase"/>
    <property type="match status" value="2"/>
</dbReference>
<dbReference type="InterPro" id="IPR000409">
    <property type="entry name" value="BEACH_dom"/>
</dbReference>
<dbReference type="InterPro" id="IPR036372">
    <property type="entry name" value="BEACH_dom_sf"/>
</dbReference>
<dbReference type="InterPro" id="IPR011009">
    <property type="entry name" value="Kinase-like_dom_sf"/>
</dbReference>
<dbReference type="InterPro" id="IPR015943">
    <property type="entry name" value="WD40/YVTN_repeat-like_dom_sf"/>
</dbReference>
<dbReference type="InterPro" id="IPR036322">
    <property type="entry name" value="WD40_repeat_dom_sf"/>
</dbReference>
<dbReference type="InterPro" id="IPR001680">
    <property type="entry name" value="WD40_rpt"/>
</dbReference>
<dbReference type="InterPro" id="IPR052651">
    <property type="entry name" value="WDR81"/>
</dbReference>
<dbReference type="PANTHER" id="PTHR44662">
    <property type="entry name" value="WD REPEAT-CONTAINING PROTEIN 81"/>
    <property type="match status" value="1"/>
</dbReference>
<dbReference type="PANTHER" id="PTHR44662:SF1">
    <property type="entry name" value="WD REPEAT-CONTAINING PROTEIN 81"/>
    <property type="match status" value="1"/>
</dbReference>
<dbReference type="Pfam" id="PF02138">
    <property type="entry name" value="Beach"/>
    <property type="match status" value="1"/>
</dbReference>
<dbReference type="Pfam" id="PF00400">
    <property type="entry name" value="WD40"/>
    <property type="match status" value="1"/>
</dbReference>
<dbReference type="SMART" id="SM01026">
    <property type="entry name" value="Beach"/>
    <property type="match status" value="1"/>
</dbReference>
<dbReference type="SMART" id="SM00320">
    <property type="entry name" value="WD40"/>
    <property type="match status" value="6"/>
</dbReference>
<dbReference type="SUPFAM" id="SSF81837">
    <property type="entry name" value="BEACH domain"/>
    <property type="match status" value="1"/>
</dbReference>
<dbReference type="SUPFAM" id="SSF56112">
    <property type="entry name" value="Protein kinase-like (PK-like)"/>
    <property type="match status" value="1"/>
</dbReference>
<dbReference type="SUPFAM" id="SSF50978">
    <property type="entry name" value="WD40 repeat-like"/>
    <property type="match status" value="1"/>
</dbReference>
<dbReference type="PROSITE" id="PS50197">
    <property type="entry name" value="BEACH"/>
    <property type="match status" value="1"/>
</dbReference>
<dbReference type="PROSITE" id="PS50082">
    <property type="entry name" value="WD_REPEATS_2"/>
    <property type="match status" value="1"/>
</dbReference>
<dbReference type="PROSITE" id="PS50294">
    <property type="entry name" value="WD_REPEATS_REGION"/>
    <property type="match status" value="1"/>
</dbReference>
<feature type="chain" id="PRO_0000418625" description="WD repeat-containing protein 81">
    <location>
        <begin position="1"/>
        <end position="1933"/>
    </location>
</feature>
<feature type="domain" description="BEACH" evidence="3">
    <location>
        <begin position="333"/>
        <end position="610"/>
    </location>
</feature>
<feature type="repeat" description="WD 1">
    <location>
        <begin position="1638"/>
        <end position="1677"/>
    </location>
</feature>
<feature type="repeat" description="WD 2">
    <location>
        <begin position="1684"/>
        <end position="1724"/>
    </location>
</feature>
<feature type="repeat" description="WD 3">
    <location>
        <begin position="1776"/>
        <end position="1815"/>
    </location>
</feature>
<feature type="repeat" description="WD 4">
    <location>
        <begin position="1818"/>
        <end position="1856"/>
    </location>
</feature>
<feature type="repeat" description="WD 5">
    <location>
        <begin position="1903"/>
        <end position="1933"/>
    </location>
</feature>
<feature type="region of interest" description="Necessary and sufficient for the interaction with SQSTM1" evidence="1">
    <location>
        <begin position="1"/>
        <end position="643"/>
    </location>
</feature>
<feature type="region of interest" description="Disordered" evidence="4">
    <location>
        <begin position="305"/>
        <end position="334"/>
    </location>
</feature>
<feature type="region of interest" description="Disordered" evidence="4">
    <location>
        <begin position="663"/>
        <end position="714"/>
    </location>
</feature>
<feature type="region of interest" description="Disordered" evidence="4">
    <location>
        <begin position="1038"/>
        <end position="1057"/>
    </location>
</feature>
<feature type="region of interest" description="Disordered" evidence="4">
    <location>
        <begin position="1090"/>
        <end position="1209"/>
    </location>
</feature>
<feature type="region of interest" description="Disordered" evidence="4">
    <location>
        <begin position="1517"/>
        <end position="1544"/>
    </location>
</feature>
<feature type="region of interest" description="Disordered" evidence="4">
    <location>
        <begin position="1565"/>
        <end position="1590"/>
    </location>
</feature>
<feature type="compositionally biased region" description="Basic and acidic residues" evidence="4">
    <location>
        <begin position="314"/>
        <end position="330"/>
    </location>
</feature>
<feature type="compositionally biased region" description="Low complexity" evidence="4">
    <location>
        <begin position="668"/>
        <end position="693"/>
    </location>
</feature>
<feature type="compositionally biased region" description="Polar residues" evidence="4">
    <location>
        <begin position="1100"/>
        <end position="1112"/>
    </location>
</feature>
<feature type="compositionally biased region" description="Polar residues" evidence="4">
    <location>
        <begin position="1131"/>
        <end position="1140"/>
    </location>
</feature>
<feature type="compositionally biased region" description="Acidic residues" evidence="4">
    <location>
        <begin position="1145"/>
        <end position="1166"/>
    </location>
</feature>
<comment type="function">
    <text evidence="1 2">Functions as a negative regulator of the PI3 kinase/PI3K activity associated with endosomal membranes via BECN1, a core subunit of the PI3K complex. By modifying the phosphatidylinositol 3-phosphate/PtdInsP3 content of endosomal membranes may regulate endosome fusion, recycling, sorting and early to late endosome transport. It is for instance, required for the delivery of cargos like BST2/tetherin from early to late endosome and thereby participates indirectly to their degradation by the lysosome. May also play a role in aggrephagy, the macroautophagic degradation of ubiquitinated protein aggregates. In this process, may regulate the interaction of SQSTM1 with ubiquitinated proteins and also recruit MAP1LC3C. May also be involved in maintenance of normal mitochondrial structure and organization.</text>
</comment>
<comment type="subunit">
    <text evidence="1">Interacts with WDR91; involved in early to late endosome cargo transport. Interacts with BECN1; negatively regulates the PI3 kinase/PI3K activity associated with endosomal membranes. Interacts with SQSTM1; the interaction is direct and regulates the interaction of SQSTM1 with ubiquitinated proteins. Interacts with MAP1LC3C; recruits MAP1LC3C to ubiquitinated protein aggregates in the aggrephagy process.</text>
</comment>
<comment type="subcellular location">
    <subcellularLocation>
        <location evidence="1">Early endosome membrane</location>
        <topology evidence="1">Peripheral membrane protein</topology>
    </subcellularLocation>
    <subcellularLocation>
        <location evidence="1">Late endosome membrane</location>
    </subcellularLocation>
    <subcellularLocation>
        <location evidence="1">Lysosome membrane</location>
    </subcellularLocation>
    <subcellularLocation>
        <location evidence="1">Cytoplasmic vesicle</location>
        <location evidence="1">Autophagosome membrane</location>
    </subcellularLocation>
    <subcellularLocation>
        <location evidence="1">Mitochondrion</location>
    </subcellularLocation>
    <subcellularLocation>
        <location evidence="1">Cytoplasm</location>
        <location evidence="1">Cytosol</location>
    </subcellularLocation>
</comment>
<comment type="similarity">
    <text evidence="5">Belongs to the WD repeat WDR81 family.</text>
</comment>
<organism>
    <name type="scientific">Rattus norvegicus</name>
    <name type="common">Rat</name>
    <dbReference type="NCBI Taxonomy" id="10116"/>
    <lineage>
        <taxon>Eukaryota</taxon>
        <taxon>Metazoa</taxon>
        <taxon>Chordata</taxon>
        <taxon>Craniata</taxon>
        <taxon>Vertebrata</taxon>
        <taxon>Euteleostomi</taxon>
        <taxon>Mammalia</taxon>
        <taxon>Eutheria</taxon>
        <taxon>Euarchontoglires</taxon>
        <taxon>Glires</taxon>
        <taxon>Rodentia</taxon>
        <taxon>Myomorpha</taxon>
        <taxon>Muroidea</taxon>
        <taxon>Muridae</taxon>
        <taxon>Murinae</taxon>
        <taxon>Rattus</taxon>
    </lineage>
</organism>
<gene>
    <name evidence="6" type="primary">Wdr81</name>
</gene>
<sequence length="1933" mass="212260">MAQGSRRRKVVLTAGAEGCSSSSGPDMEELLRCAERDLNIDARQLALAPGGTHVVALVSTRWLASLRERRLGPCPRAEGLGEAEVRTLLQRSVQRLPQGWTRVEVHGLRKRRLSYPLSRVLPFEEGSCSPETLTRFMQEVAAQNYRNLWRHAYHTYGQPYSHSTAPSAIPALDSIRQALQRVYGCTFLPVGESMQCLSNVRDGPSRGSSACPSLLRAEALLESPEMLYVVHPYVQFSLHDVVTFSPAKLTNSQAKVLFILFRVLRAMDACHRQGLACGALSLHHIAVDEKLCSELRLDLSAYEMPSEDENQEVSEEKDRTGVKSEKDGEGRPGCPTCQKELRGLVLDWVHGRVSNFYYLMQLNRLAGRRQGDPNYHPVLPWVVDFTTPYGRFRDLRKSKFRLNKGDKQLDFTYEMTRQAFVAGGAGSGEPLHVPHHISDVLSDITYYVYKARRTPRSVLCGHVRAQWEPHEYPATMERMQTWTPDECIPEFYTDPSIFCSIHPDMPDLDVPAWCSSNQEFVTAHRALLESWEVSQDLHHWIDLTFGYKLQGKEAVKEKNVCLHLVDAHTHLTSYGVVQLFDQPHPQRLAGAPALAPEPPLIPRLLVQPIQEATGQEDISGQLINGAGRHVVEVTPCESGWTRERPTAGEDDLEQATEALDSISIPGKAGDQPGSSSSQASPGLLPFSAPSGSRPGRRSKATGLDSGEGDEGKIVLPEGFSPIQALEELEKVGNFLARGLGSQLEEPEKPQAQPPVYLQSLFHRDMQVLGVLLAEMVFATRVRILQPDAPLWVRFEAVRGLCTRHSKDIPVSLQPVLDTLLQLSGPKSPLVVKKGKLDPLFEYRPVSQGLPPPSPAQLLSPFSSVVPFPTYFPALHKFILLYQARRVEDEVQGRELVFALWQQLGAVLNEITPEGLEILLPFVLSLMSEEHTAVYTAWYLFEPVAKALGPKNTIKYLLKPLIGAYENPCRLHGRFYLYTDCFVAQLVVRLGLQAFLIHLLPHVLQVLAGVEASQEEGKGLVGTTEDEENELPVPGPGSCAFGEEIQMGGQPAASSGLGLPDYRSGVSFHDQADLPDTEDFQAGLYVAESPQPQEAEAVSLGQLSDKSSTSEASQGEERGGDDGGAPVDKNSVKSGDSSQDLKQSEGSEEEEEEEEGCVVLEEEEQDEVTGTSELTLSDTILSMETVVAPGDGRDREEEEEPLPEQTEGKEQKILLDTACKMVRWLSAKLGPTVASRHVARNLLRLLTSCYVGPTRQQFTVSCDDSPPLNAGNIYQKRPVLGDIVSGPVLSCLLHIAHLYGEPVLTYQYLPYISYLVAPGSNSSPSRLNSRKEAGLLAAVTLTQKIIVYLSDTTLMDILPRISHEVLLPVLSFLTSFVTGFPSGAQARTVLCVKTISLIALICLRIGQEMVQQHLSEPVATFFQVFSHLHELRQQDLQLDLKGCTEGQLPEATFSDGQRRPVDPTLLEELQKVFTLEMAYTIYVPFSCLLGDIIRKIIPNHELVGELAGLYLESMSPSSLRNPASMEPVTPSAGPEWNPQSGSCLQDDGHSGTFGSVLVGNRIQIPDSQPQSSGPLGSISGVGSGGLSSRNEDNALKRELPRSAHGLSGNWLAYWQYEIGVSQQDAHFHFHQIRLQSFPGHTGAVKCVAALSSEDFFLSGSKDRTVRLWPLYNYGDGTSETAPRLIYAQHRKSVFYVGQLEAPQYVVSCDGAVHVWDPFTGKTLRTVDPSDSRVPLTAVAVMPAPHTSITMASSDSTLRFVDCRKPGLQHEFRLGGGLNPGLVRSLAVSPSGRSVVAGFSSGFMVLLDTRTGLVLRGWPAHEGDILQIKAVEGSVIVSSSSDHSLTVWKELEQKPTHHYKSASDPIHTFDLYGSEVVTGTVANKIGVCSLLEPPSQATTKLSSENFRGTLTSLALLPTKRHLLLGSDNGIIRLLA</sequence>
<keyword id="KW-0963">Cytoplasm</keyword>
<keyword id="KW-0968">Cytoplasmic vesicle</keyword>
<keyword id="KW-0967">Endosome</keyword>
<keyword id="KW-0458">Lysosome</keyword>
<keyword id="KW-0472">Membrane</keyword>
<keyword id="KW-0496">Mitochondrion</keyword>
<keyword id="KW-1185">Reference proteome</keyword>
<keyword id="KW-0677">Repeat</keyword>
<keyword id="KW-0809">Transit peptide</keyword>
<keyword id="KW-0853">WD repeat</keyword>
<proteinExistence type="inferred from homology"/>
<reference key="1">
    <citation type="submission" date="2005-07" db="EMBL/GenBank/DDBJ databases">
        <authorList>
            <person name="Mural R.J."/>
            <person name="Adams M.D."/>
            <person name="Myers E.W."/>
            <person name="Smith H.O."/>
            <person name="Venter J.C."/>
        </authorList>
    </citation>
    <scope>NUCLEOTIDE SEQUENCE [LARGE SCALE GENOMIC DNA]</scope>
</reference>
<evidence type="ECO:0000250" key="1">
    <source>
        <dbReference type="UniProtKB" id="Q562E7"/>
    </source>
</evidence>
<evidence type="ECO:0000250" key="2">
    <source>
        <dbReference type="UniProtKB" id="Q5ND34"/>
    </source>
</evidence>
<evidence type="ECO:0000255" key="3">
    <source>
        <dbReference type="PROSITE-ProRule" id="PRU00026"/>
    </source>
</evidence>
<evidence type="ECO:0000256" key="4">
    <source>
        <dbReference type="SAM" id="MobiDB-lite"/>
    </source>
</evidence>
<evidence type="ECO:0000305" key="5"/>
<evidence type="ECO:0000312" key="6">
    <source>
        <dbReference type="RGD" id="1311334"/>
    </source>
</evidence>
<protein>
    <recommendedName>
        <fullName evidence="6">WD repeat-containing protein 81</fullName>
    </recommendedName>
</protein>
<accession>D4A929</accession>